<reference key="1">
    <citation type="journal article" date="2001" name="DNA Res.">
        <title>Complete genomic sequence of the filamentous nitrogen-fixing cyanobacterium Anabaena sp. strain PCC 7120.</title>
        <authorList>
            <person name="Kaneko T."/>
            <person name="Nakamura Y."/>
            <person name="Wolk C.P."/>
            <person name="Kuritz T."/>
            <person name="Sasamoto S."/>
            <person name="Watanabe A."/>
            <person name="Iriguchi M."/>
            <person name="Ishikawa A."/>
            <person name="Kawashima K."/>
            <person name="Kimura T."/>
            <person name="Kishida Y."/>
            <person name="Kohara M."/>
            <person name="Matsumoto M."/>
            <person name="Matsuno A."/>
            <person name="Muraki A."/>
            <person name="Nakazaki N."/>
            <person name="Shimpo S."/>
            <person name="Sugimoto M."/>
            <person name="Takazawa M."/>
            <person name="Yamada M."/>
            <person name="Yasuda M."/>
            <person name="Tabata S."/>
        </authorList>
    </citation>
    <scope>NUCLEOTIDE SEQUENCE [LARGE SCALE GENOMIC DNA]</scope>
    <source>
        <strain>PCC 7120 / SAG 25.82 / UTEX 2576</strain>
    </source>
</reference>
<sequence length="127" mass="14230">MDLIVEDLAAIDNKLSQRHIDLDPNGYFIIYIDKTAGLIYAKHFTNIIDERGLAVDPETGKVIPARGKVERTYTTVFAGRTAKELCVKIFEETQPCPVTMLDHAAYLGREFVRAEVALVAGQEYVQD</sequence>
<feature type="chain" id="PRO_0000277363" description="Ycf91-like protein">
    <location>
        <begin position="1"/>
        <end position="127"/>
    </location>
</feature>
<gene>
    <name type="ordered locus">all4101</name>
</gene>
<proteinExistence type="inferred from homology"/>
<accession>Q8YPT9</accession>
<evidence type="ECO:0000305" key="1"/>
<protein>
    <recommendedName>
        <fullName>Ycf91-like protein</fullName>
    </recommendedName>
</protein>
<name>YC91L_NOSS1</name>
<comment type="similarity">
    <text evidence="1">Belongs to the ycf91 family.</text>
</comment>
<keyword id="KW-1185">Reference proteome</keyword>
<dbReference type="EMBL" id="BA000019">
    <property type="protein sequence ID" value="BAB75800.1"/>
    <property type="molecule type" value="Genomic_DNA"/>
</dbReference>
<dbReference type="PIR" id="AF2318">
    <property type="entry name" value="AF2318"/>
</dbReference>
<dbReference type="RefSeq" id="WP_010998241.1">
    <property type="nucleotide sequence ID" value="NZ_RSCN01000057.1"/>
</dbReference>
<dbReference type="STRING" id="103690.gene:10496149"/>
<dbReference type="KEGG" id="ana:all4101"/>
<dbReference type="eggNOG" id="ENOG502ZQ0M">
    <property type="taxonomic scope" value="Bacteria"/>
</dbReference>
<dbReference type="OrthoDB" id="485863at2"/>
<dbReference type="Proteomes" id="UP000002483">
    <property type="component" value="Chromosome"/>
</dbReference>
<dbReference type="InterPro" id="IPR025595">
    <property type="entry name" value="PterinBD-DUF4346"/>
</dbReference>
<dbReference type="InterPro" id="IPR017260">
    <property type="entry name" value="UCP037673"/>
</dbReference>
<dbReference type="Pfam" id="PF14251">
    <property type="entry name" value="PterinBD-DUF4346"/>
    <property type="match status" value="1"/>
</dbReference>
<dbReference type="PIRSF" id="PIRSF037673">
    <property type="entry name" value="UCP037673"/>
    <property type="match status" value="1"/>
</dbReference>
<organism>
    <name type="scientific">Nostoc sp. (strain PCC 7120 / SAG 25.82 / UTEX 2576)</name>
    <dbReference type="NCBI Taxonomy" id="103690"/>
    <lineage>
        <taxon>Bacteria</taxon>
        <taxon>Bacillati</taxon>
        <taxon>Cyanobacteriota</taxon>
        <taxon>Cyanophyceae</taxon>
        <taxon>Nostocales</taxon>
        <taxon>Nostocaceae</taxon>
        <taxon>Nostoc</taxon>
    </lineage>
</organism>